<protein>
    <recommendedName>
        <fullName evidence="1">Large ribosomal subunit protein bL21</fullName>
    </recommendedName>
    <alternativeName>
        <fullName evidence="2">50S ribosomal protein L21</fullName>
    </alternativeName>
</protein>
<proteinExistence type="inferred from homology"/>
<evidence type="ECO:0000255" key="1">
    <source>
        <dbReference type="HAMAP-Rule" id="MF_01363"/>
    </source>
</evidence>
<evidence type="ECO:0000305" key="2"/>
<feature type="chain" id="PRO_0000269349" description="Large ribosomal subunit protein bL21">
    <location>
        <begin position="1"/>
        <end position="102"/>
    </location>
</feature>
<reference key="1">
    <citation type="journal article" date="2000" name="Science">
        <title>Complete genome sequence of Neisseria meningitidis serogroup B strain MC58.</title>
        <authorList>
            <person name="Tettelin H."/>
            <person name="Saunders N.J."/>
            <person name="Heidelberg J.F."/>
            <person name="Jeffries A.C."/>
            <person name="Nelson K.E."/>
            <person name="Eisen J.A."/>
            <person name="Ketchum K.A."/>
            <person name="Hood D.W."/>
            <person name="Peden J.F."/>
            <person name="Dodson R.J."/>
            <person name="Nelson W.C."/>
            <person name="Gwinn M.L."/>
            <person name="DeBoy R.T."/>
            <person name="Peterson J.D."/>
            <person name="Hickey E.K."/>
            <person name="Haft D.H."/>
            <person name="Salzberg S.L."/>
            <person name="White O."/>
            <person name="Fleischmann R.D."/>
            <person name="Dougherty B.A."/>
            <person name="Mason T.M."/>
            <person name="Ciecko A."/>
            <person name="Parksey D.S."/>
            <person name="Blair E."/>
            <person name="Cittone H."/>
            <person name="Clark E.B."/>
            <person name="Cotton M.D."/>
            <person name="Utterback T.R."/>
            <person name="Khouri H.M."/>
            <person name="Qin H."/>
            <person name="Vamathevan J.J."/>
            <person name="Gill J."/>
            <person name="Scarlato V."/>
            <person name="Masignani V."/>
            <person name="Pizza M."/>
            <person name="Grandi G."/>
            <person name="Sun L."/>
            <person name="Smith H.O."/>
            <person name="Fraser C.M."/>
            <person name="Moxon E.R."/>
            <person name="Rappuoli R."/>
            <person name="Venter J.C."/>
        </authorList>
    </citation>
    <scope>NUCLEOTIDE SEQUENCE [LARGE SCALE GENOMIC DNA]</scope>
    <source>
        <strain>ATCC BAA-335 / MC58</strain>
    </source>
</reference>
<organism>
    <name type="scientific">Neisseria meningitidis serogroup B (strain ATCC BAA-335 / MC58)</name>
    <dbReference type="NCBI Taxonomy" id="122586"/>
    <lineage>
        <taxon>Bacteria</taxon>
        <taxon>Pseudomonadati</taxon>
        <taxon>Pseudomonadota</taxon>
        <taxon>Betaproteobacteria</taxon>
        <taxon>Neisseriales</taxon>
        <taxon>Neisseriaceae</taxon>
        <taxon>Neisseria</taxon>
    </lineage>
</organism>
<dbReference type="EMBL" id="AE002098">
    <property type="protein sequence ID" value="AAF40770.1"/>
    <property type="molecule type" value="Genomic_DNA"/>
</dbReference>
<dbReference type="RefSeq" id="NP_273374.1">
    <property type="nucleotide sequence ID" value="NC_003112.2"/>
</dbReference>
<dbReference type="RefSeq" id="WP_002216394.1">
    <property type="nucleotide sequence ID" value="NC_003112.2"/>
</dbReference>
<dbReference type="SMR" id="Q7DDR4"/>
<dbReference type="FunCoup" id="Q7DDR4">
    <property type="interactions" value="584"/>
</dbReference>
<dbReference type="STRING" id="122586.NMB0325"/>
<dbReference type="PaxDb" id="122586-NMB0325"/>
<dbReference type="GeneID" id="93387416"/>
<dbReference type="KEGG" id="nme:NMB0325"/>
<dbReference type="PATRIC" id="fig|122586.8.peg.412"/>
<dbReference type="HOGENOM" id="CLU_061463_3_2_4"/>
<dbReference type="InParanoid" id="Q7DDR4"/>
<dbReference type="OrthoDB" id="9813334at2"/>
<dbReference type="Proteomes" id="UP000000425">
    <property type="component" value="Chromosome"/>
</dbReference>
<dbReference type="GO" id="GO:0005737">
    <property type="term" value="C:cytoplasm"/>
    <property type="evidence" value="ECO:0007669"/>
    <property type="project" value="UniProtKB-ARBA"/>
</dbReference>
<dbReference type="GO" id="GO:1990904">
    <property type="term" value="C:ribonucleoprotein complex"/>
    <property type="evidence" value="ECO:0007669"/>
    <property type="project" value="UniProtKB-KW"/>
</dbReference>
<dbReference type="GO" id="GO:0005840">
    <property type="term" value="C:ribosome"/>
    <property type="evidence" value="ECO:0007669"/>
    <property type="project" value="UniProtKB-KW"/>
</dbReference>
<dbReference type="GO" id="GO:0019843">
    <property type="term" value="F:rRNA binding"/>
    <property type="evidence" value="ECO:0007669"/>
    <property type="project" value="UniProtKB-UniRule"/>
</dbReference>
<dbReference type="GO" id="GO:0003735">
    <property type="term" value="F:structural constituent of ribosome"/>
    <property type="evidence" value="ECO:0000318"/>
    <property type="project" value="GO_Central"/>
</dbReference>
<dbReference type="GO" id="GO:0006412">
    <property type="term" value="P:translation"/>
    <property type="evidence" value="ECO:0007669"/>
    <property type="project" value="UniProtKB-UniRule"/>
</dbReference>
<dbReference type="HAMAP" id="MF_01363">
    <property type="entry name" value="Ribosomal_bL21"/>
    <property type="match status" value="1"/>
</dbReference>
<dbReference type="InterPro" id="IPR028909">
    <property type="entry name" value="bL21-like"/>
</dbReference>
<dbReference type="InterPro" id="IPR036164">
    <property type="entry name" value="bL21-like_sf"/>
</dbReference>
<dbReference type="InterPro" id="IPR001787">
    <property type="entry name" value="Ribosomal_bL21"/>
</dbReference>
<dbReference type="InterPro" id="IPR018258">
    <property type="entry name" value="Ribosomal_bL21_CS"/>
</dbReference>
<dbReference type="NCBIfam" id="TIGR00061">
    <property type="entry name" value="L21"/>
    <property type="match status" value="1"/>
</dbReference>
<dbReference type="PANTHER" id="PTHR21349">
    <property type="entry name" value="50S RIBOSOMAL PROTEIN L21"/>
    <property type="match status" value="1"/>
</dbReference>
<dbReference type="PANTHER" id="PTHR21349:SF0">
    <property type="entry name" value="LARGE RIBOSOMAL SUBUNIT PROTEIN BL21M"/>
    <property type="match status" value="1"/>
</dbReference>
<dbReference type="Pfam" id="PF00829">
    <property type="entry name" value="Ribosomal_L21p"/>
    <property type="match status" value="1"/>
</dbReference>
<dbReference type="SUPFAM" id="SSF141091">
    <property type="entry name" value="L21p-like"/>
    <property type="match status" value="1"/>
</dbReference>
<dbReference type="PROSITE" id="PS01169">
    <property type="entry name" value="RIBOSOMAL_L21"/>
    <property type="match status" value="1"/>
</dbReference>
<comment type="function">
    <text evidence="1">This protein binds to 23S rRNA in the presence of protein L20.</text>
</comment>
<comment type="subunit">
    <text evidence="1">Part of the 50S ribosomal subunit. Contacts protein L20.</text>
</comment>
<comment type="similarity">
    <text evidence="1">Belongs to the bacterial ribosomal protein bL21 family.</text>
</comment>
<gene>
    <name evidence="1" type="primary">rplU</name>
    <name type="ordered locus">NMB0325</name>
</gene>
<accession>Q7DDR4</accession>
<name>RL21_NEIMB</name>
<keyword id="KW-1185">Reference proteome</keyword>
<keyword id="KW-0687">Ribonucleoprotein</keyword>
<keyword id="KW-0689">Ribosomal protein</keyword>
<keyword id="KW-0694">RNA-binding</keyword>
<keyword id="KW-0699">rRNA-binding</keyword>
<sequence length="102" mass="11448">MYAVVKTGGKQYKVSVGEKLKVEQIPAELDSQIELTEVLMIADGESVKVGAPFIEGAKVTAKVVAHGRGEKVRIFKMRRRKHYQKRQGHRQNFTQIEIVAIA</sequence>